<accession>C1CIA0</accession>
<reference key="1">
    <citation type="journal article" date="2010" name="Genome Biol.">
        <title>Structure and dynamics of the pan-genome of Streptococcus pneumoniae and closely related species.</title>
        <authorList>
            <person name="Donati C."/>
            <person name="Hiller N.L."/>
            <person name="Tettelin H."/>
            <person name="Muzzi A."/>
            <person name="Croucher N.J."/>
            <person name="Angiuoli S.V."/>
            <person name="Oggioni M."/>
            <person name="Dunning Hotopp J.C."/>
            <person name="Hu F.Z."/>
            <person name="Riley D.R."/>
            <person name="Covacci A."/>
            <person name="Mitchell T.J."/>
            <person name="Bentley S.D."/>
            <person name="Kilian M."/>
            <person name="Ehrlich G.D."/>
            <person name="Rappuoli R."/>
            <person name="Moxon E.R."/>
            <person name="Masignani V."/>
        </authorList>
    </citation>
    <scope>NUCLEOTIDE SEQUENCE [LARGE SCALE GENOMIC DNA]</scope>
    <source>
        <strain>P1031</strain>
    </source>
</reference>
<name>RL2_STRZP</name>
<evidence type="ECO:0000255" key="1">
    <source>
        <dbReference type="HAMAP-Rule" id="MF_01320"/>
    </source>
</evidence>
<evidence type="ECO:0000256" key="2">
    <source>
        <dbReference type="SAM" id="MobiDB-lite"/>
    </source>
</evidence>
<evidence type="ECO:0000305" key="3"/>
<gene>
    <name evidence="1" type="primary">rplB</name>
    <name type="ordered locus">SPP_0263</name>
</gene>
<organism>
    <name type="scientific">Streptococcus pneumoniae (strain P1031)</name>
    <dbReference type="NCBI Taxonomy" id="488223"/>
    <lineage>
        <taxon>Bacteria</taxon>
        <taxon>Bacillati</taxon>
        <taxon>Bacillota</taxon>
        <taxon>Bacilli</taxon>
        <taxon>Lactobacillales</taxon>
        <taxon>Streptococcaceae</taxon>
        <taxon>Streptococcus</taxon>
    </lineage>
</organism>
<proteinExistence type="inferred from homology"/>
<sequence>MGIRVYKPTTNGRRNMTSLDFAEITTSTPEKSLLVALKSKAGRNNNGRITVRHQGGGHKRFYRLVDFKRNKDNVEAVVKTIEYDPNRSANIALVHYTDGVKAYIIAPKGLEVGQRIVSGPEADIKVGNALPLANIPVGTLIHNIELKPGRGGELVRAAGASAQVLGSEGKYVLVRLQSGEVRMILGTCRATVGVVGNEQHGLVNLGKAGRSRWKGIRPTVRGSVMNPNDHPHGGGEGKAPVGRKAPSTPWGKPALGLKTRNKKAKSDKLIVRRRNEK</sequence>
<comment type="function">
    <text evidence="1">One of the primary rRNA binding proteins. Required for association of the 30S and 50S subunits to form the 70S ribosome, for tRNA binding and peptide bond formation. It has been suggested to have peptidyltransferase activity; this is somewhat controversial. Makes several contacts with the 16S rRNA in the 70S ribosome.</text>
</comment>
<comment type="subunit">
    <text evidence="1">Part of the 50S ribosomal subunit. Forms a bridge to the 30S subunit in the 70S ribosome.</text>
</comment>
<comment type="similarity">
    <text evidence="1">Belongs to the universal ribosomal protein uL2 family.</text>
</comment>
<protein>
    <recommendedName>
        <fullName evidence="1">Large ribosomal subunit protein uL2</fullName>
    </recommendedName>
    <alternativeName>
        <fullName evidence="3">50S ribosomal protein L2</fullName>
    </alternativeName>
</protein>
<keyword id="KW-0687">Ribonucleoprotein</keyword>
<keyword id="KW-0689">Ribosomal protein</keyword>
<keyword id="KW-0694">RNA-binding</keyword>
<keyword id="KW-0699">rRNA-binding</keyword>
<dbReference type="EMBL" id="CP000920">
    <property type="protein sequence ID" value="ACO20572.1"/>
    <property type="molecule type" value="Genomic_DNA"/>
</dbReference>
<dbReference type="RefSeq" id="WP_000512911.1">
    <property type="nucleotide sequence ID" value="NC_012467.1"/>
</dbReference>
<dbReference type="SMR" id="C1CIA0"/>
<dbReference type="GeneID" id="93738960"/>
<dbReference type="KEGG" id="spp:SPP_0263"/>
<dbReference type="HOGENOM" id="CLU_036235_2_1_9"/>
<dbReference type="GO" id="GO:0015934">
    <property type="term" value="C:large ribosomal subunit"/>
    <property type="evidence" value="ECO:0007669"/>
    <property type="project" value="InterPro"/>
</dbReference>
<dbReference type="GO" id="GO:0019843">
    <property type="term" value="F:rRNA binding"/>
    <property type="evidence" value="ECO:0007669"/>
    <property type="project" value="UniProtKB-UniRule"/>
</dbReference>
<dbReference type="GO" id="GO:0003735">
    <property type="term" value="F:structural constituent of ribosome"/>
    <property type="evidence" value="ECO:0007669"/>
    <property type="project" value="InterPro"/>
</dbReference>
<dbReference type="GO" id="GO:0016740">
    <property type="term" value="F:transferase activity"/>
    <property type="evidence" value="ECO:0007669"/>
    <property type="project" value="InterPro"/>
</dbReference>
<dbReference type="GO" id="GO:0002181">
    <property type="term" value="P:cytoplasmic translation"/>
    <property type="evidence" value="ECO:0007669"/>
    <property type="project" value="TreeGrafter"/>
</dbReference>
<dbReference type="FunFam" id="2.30.30.30:FF:000001">
    <property type="entry name" value="50S ribosomal protein L2"/>
    <property type="match status" value="1"/>
</dbReference>
<dbReference type="FunFam" id="2.40.50.140:FF:000003">
    <property type="entry name" value="50S ribosomal protein L2"/>
    <property type="match status" value="1"/>
</dbReference>
<dbReference type="FunFam" id="4.10.950.10:FF:000001">
    <property type="entry name" value="50S ribosomal protein L2"/>
    <property type="match status" value="1"/>
</dbReference>
<dbReference type="Gene3D" id="2.30.30.30">
    <property type="match status" value="1"/>
</dbReference>
<dbReference type="Gene3D" id="2.40.50.140">
    <property type="entry name" value="Nucleic acid-binding proteins"/>
    <property type="match status" value="1"/>
</dbReference>
<dbReference type="Gene3D" id="4.10.950.10">
    <property type="entry name" value="Ribosomal protein L2, domain 3"/>
    <property type="match status" value="1"/>
</dbReference>
<dbReference type="HAMAP" id="MF_01320_B">
    <property type="entry name" value="Ribosomal_uL2_B"/>
    <property type="match status" value="1"/>
</dbReference>
<dbReference type="InterPro" id="IPR012340">
    <property type="entry name" value="NA-bd_OB-fold"/>
</dbReference>
<dbReference type="InterPro" id="IPR014722">
    <property type="entry name" value="Rib_uL2_dom2"/>
</dbReference>
<dbReference type="InterPro" id="IPR002171">
    <property type="entry name" value="Ribosomal_uL2"/>
</dbReference>
<dbReference type="InterPro" id="IPR005880">
    <property type="entry name" value="Ribosomal_uL2_bac/org-type"/>
</dbReference>
<dbReference type="InterPro" id="IPR022669">
    <property type="entry name" value="Ribosomal_uL2_C"/>
</dbReference>
<dbReference type="InterPro" id="IPR022671">
    <property type="entry name" value="Ribosomal_uL2_CS"/>
</dbReference>
<dbReference type="InterPro" id="IPR014726">
    <property type="entry name" value="Ribosomal_uL2_dom3"/>
</dbReference>
<dbReference type="InterPro" id="IPR022666">
    <property type="entry name" value="Ribosomal_uL2_RNA-bd_dom"/>
</dbReference>
<dbReference type="InterPro" id="IPR008991">
    <property type="entry name" value="Translation_prot_SH3-like_sf"/>
</dbReference>
<dbReference type="NCBIfam" id="TIGR01171">
    <property type="entry name" value="rplB_bact"/>
    <property type="match status" value="1"/>
</dbReference>
<dbReference type="PANTHER" id="PTHR13691:SF5">
    <property type="entry name" value="LARGE RIBOSOMAL SUBUNIT PROTEIN UL2M"/>
    <property type="match status" value="1"/>
</dbReference>
<dbReference type="PANTHER" id="PTHR13691">
    <property type="entry name" value="RIBOSOMAL PROTEIN L2"/>
    <property type="match status" value="1"/>
</dbReference>
<dbReference type="Pfam" id="PF00181">
    <property type="entry name" value="Ribosomal_L2"/>
    <property type="match status" value="1"/>
</dbReference>
<dbReference type="Pfam" id="PF03947">
    <property type="entry name" value="Ribosomal_L2_C"/>
    <property type="match status" value="1"/>
</dbReference>
<dbReference type="PIRSF" id="PIRSF002158">
    <property type="entry name" value="Ribosomal_L2"/>
    <property type="match status" value="1"/>
</dbReference>
<dbReference type="SMART" id="SM01383">
    <property type="entry name" value="Ribosomal_L2"/>
    <property type="match status" value="1"/>
</dbReference>
<dbReference type="SMART" id="SM01382">
    <property type="entry name" value="Ribosomal_L2_C"/>
    <property type="match status" value="1"/>
</dbReference>
<dbReference type="SUPFAM" id="SSF50249">
    <property type="entry name" value="Nucleic acid-binding proteins"/>
    <property type="match status" value="1"/>
</dbReference>
<dbReference type="SUPFAM" id="SSF50104">
    <property type="entry name" value="Translation proteins SH3-like domain"/>
    <property type="match status" value="1"/>
</dbReference>
<dbReference type="PROSITE" id="PS00467">
    <property type="entry name" value="RIBOSOMAL_L2"/>
    <property type="match status" value="1"/>
</dbReference>
<feature type="chain" id="PRO_1000165774" description="Large ribosomal subunit protein uL2">
    <location>
        <begin position="1"/>
        <end position="277"/>
    </location>
</feature>
<feature type="region of interest" description="Disordered" evidence="2">
    <location>
        <begin position="219"/>
        <end position="277"/>
    </location>
</feature>
<feature type="compositionally biased region" description="Basic and acidic residues" evidence="2">
    <location>
        <begin position="264"/>
        <end position="277"/>
    </location>
</feature>